<name>MQNX_STRCO</name>
<gene>
    <name type="ordered locus">SCO5662</name>
    <name type="ORF">SC6A9.05</name>
</gene>
<dbReference type="EC" id="3.5.4.40"/>
<dbReference type="EMBL" id="AL939124">
    <property type="protein sequence ID" value="CAA19890.1"/>
    <property type="molecule type" value="Genomic_DNA"/>
</dbReference>
<dbReference type="PIR" id="T35436">
    <property type="entry name" value="T35436"/>
</dbReference>
<dbReference type="RefSeq" id="NP_629792.1">
    <property type="nucleotide sequence ID" value="NC_003888.3"/>
</dbReference>
<dbReference type="RefSeq" id="WP_011030372.1">
    <property type="nucleotide sequence ID" value="NZ_VNID01000024.1"/>
</dbReference>
<dbReference type="SMR" id="O86737"/>
<dbReference type="STRING" id="100226.gene:17763318"/>
<dbReference type="PaxDb" id="100226-SCO5662"/>
<dbReference type="KEGG" id="sco:SCO5662"/>
<dbReference type="PATRIC" id="fig|100226.15.peg.5747"/>
<dbReference type="eggNOG" id="COG1816">
    <property type="taxonomic scope" value="Bacteria"/>
</dbReference>
<dbReference type="HOGENOM" id="CLU_039228_7_0_11"/>
<dbReference type="InParanoid" id="O86737"/>
<dbReference type="OrthoDB" id="105475at2"/>
<dbReference type="PhylomeDB" id="O86737"/>
<dbReference type="BRENDA" id="3.5.4.40">
    <property type="organism ID" value="5998"/>
</dbReference>
<dbReference type="UniPathway" id="UPA00079"/>
<dbReference type="Proteomes" id="UP000001973">
    <property type="component" value="Chromosome"/>
</dbReference>
<dbReference type="GO" id="GO:0019239">
    <property type="term" value="F:deaminase activity"/>
    <property type="evidence" value="ECO:0007669"/>
    <property type="project" value="InterPro"/>
</dbReference>
<dbReference type="GO" id="GO:0016814">
    <property type="term" value="F:hydrolase activity, acting on carbon-nitrogen (but not peptide) bonds, in cyclic amidines"/>
    <property type="evidence" value="ECO:0007669"/>
    <property type="project" value="UniProtKB-ARBA"/>
</dbReference>
<dbReference type="GO" id="GO:0046872">
    <property type="term" value="F:metal ion binding"/>
    <property type="evidence" value="ECO:0007669"/>
    <property type="project" value="UniProtKB-KW"/>
</dbReference>
<dbReference type="GO" id="GO:0009234">
    <property type="term" value="P:menaquinone biosynthetic process"/>
    <property type="evidence" value="ECO:0007669"/>
    <property type="project" value="UniProtKB-UniPathway"/>
</dbReference>
<dbReference type="CDD" id="cd01320">
    <property type="entry name" value="ADA"/>
    <property type="match status" value="1"/>
</dbReference>
<dbReference type="FunFam" id="3.20.20.140:FF:000090">
    <property type="entry name" value="Adenosine deaminase"/>
    <property type="match status" value="1"/>
</dbReference>
<dbReference type="Gene3D" id="3.20.20.140">
    <property type="entry name" value="Metal-dependent hydrolases"/>
    <property type="match status" value="1"/>
</dbReference>
<dbReference type="InterPro" id="IPR001365">
    <property type="entry name" value="A_deaminase_dom"/>
</dbReference>
<dbReference type="InterPro" id="IPR006330">
    <property type="entry name" value="Ado/ade_deaminase"/>
</dbReference>
<dbReference type="InterPro" id="IPR032466">
    <property type="entry name" value="Metal_Hydrolase"/>
</dbReference>
<dbReference type="NCBIfam" id="TIGR01430">
    <property type="entry name" value="aden_deam"/>
    <property type="match status" value="1"/>
</dbReference>
<dbReference type="NCBIfam" id="NF006854">
    <property type="entry name" value="PRK09358.3-1"/>
    <property type="match status" value="1"/>
</dbReference>
<dbReference type="PANTHER" id="PTHR43114">
    <property type="entry name" value="ADENINE DEAMINASE"/>
    <property type="match status" value="1"/>
</dbReference>
<dbReference type="PANTHER" id="PTHR43114:SF6">
    <property type="entry name" value="ADENINE DEAMINASE"/>
    <property type="match status" value="1"/>
</dbReference>
<dbReference type="Pfam" id="PF00962">
    <property type="entry name" value="A_deaminase"/>
    <property type="match status" value="1"/>
</dbReference>
<dbReference type="SUPFAM" id="SSF51556">
    <property type="entry name" value="Metallo-dependent hydrolases"/>
    <property type="match status" value="1"/>
</dbReference>
<feature type="chain" id="PRO_0000194387" description="Aminodeoxyfutalosine deaminase">
    <location>
        <begin position="1"/>
        <end position="387"/>
    </location>
</feature>
<feature type="region of interest" description="Disordered" evidence="3">
    <location>
        <begin position="1"/>
        <end position="37"/>
    </location>
</feature>
<feature type="compositionally biased region" description="Basic and acidic residues" evidence="3">
    <location>
        <begin position="1"/>
        <end position="10"/>
    </location>
</feature>
<feature type="active site" description="Proton donor" evidence="1">
    <location>
        <position position="247"/>
    </location>
</feature>
<feature type="binding site" evidence="1">
    <location>
        <position position="61"/>
    </location>
    <ligand>
        <name>Zn(2+)</name>
        <dbReference type="ChEBI" id="CHEBI:29105"/>
        <note>catalytic</note>
    </ligand>
</feature>
<feature type="binding site" evidence="1">
    <location>
        <position position="63"/>
    </location>
    <ligand>
        <name>Zn(2+)</name>
        <dbReference type="ChEBI" id="CHEBI:29105"/>
        <note>catalytic</note>
    </ligand>
</feature>
<feature type="binding site" evidence="1">
    <location>
        <position position="116"/>
    </location>
    <ligand>
        <name>substrate</name>
    </ligand>
</feature>
<feature type="binding site" evidence="2">
    <location>
        <position position="183"/>
    </location>
    <ligand>
        <name>substrate</name>
    </ligand>
</feature>
<feature type="binding site" evidence="1">
    <location>
        <position position="217"/>
    </location>
    <ligand>
        <name>substrate</name>
    </ligand>
</feature>
<feature type="binding site" evidence="1">
    <location>
        <position position="244"/>
    </location>
    <ligand>
        <name>Zn(2+)</name>
        <dbReference type="ChEBI" id="CHEBI:29105"/>
        <note>catalytic</note>
    </ligand>
</feature>
<feature type="binding site" evidence="1">
    <location>
        <position position="325"/>
    </location>
    <ligand>
        <name>Zn(2+)</name>
        <dbReference type="ChEBI" id="CHEBI:29105"/>
        <note>catalytic</note>
    </ligand>
</feature>
<sequence>MRPAYDDPRTTDQPITRARPPPRAARGRRLGEEPLTEHLVDPDVPRDLHAFIAGLPKAELHVHHVGSASPRIVSELAARHADSKVPTDPEALVDYFTFTDFAHFIDVYLSVVDLIRTPEDVRLLTYEVARDMARQQVRYAELTITPFSSTRRGIDEGAFMDAIEDARKAAEAEFGTVLRWCFDIPGEAGLESAEETARLATDDRLRPEGLVSFGLGGPEIGVARPQFKPYFDRAIAAGLHSVPHAGETTGPQTVWEALIDLRAERIGHGTSSAQDPKLLAHLAERRIPLEVCPTSNIATRAVRTLDEHPIKEFVRAGVPVTINSDDPPMFGTDLNNEYAVAARLLGLDERGLADLAKNGVEASFLDAPGKARIADEIDTYTAAWLAS</sequence>
<organism>
    <name type="scientific">Streptomyces coelicolor (strain ATCC BAA-471 / A3(2) / M145)</name>
    <dbReference type="NCBI Taxonomy" id="100226"/>
    <lineage>
        <taxon>Bacteria</taxon>
        <taxon>Bacillati</taxon>
        <taxon>Actinomycetota</taxon>
        <taxon>Actinomycetes</taxon>
        <taxon>Kitasatosporales</taxon>
        <taxon>Streptomycetaceae</taxon>
        <taxon>Streptomyces</taxon>
        <taxon>Streptomyces albidoflavus group</taxon>
    </lineage>
</organism>
<keyword id="KW-0378">Hydrolase</keyword>
<keyword id="KW-0474">Menaquinone biosynthesis</keyword>
<keyword id="KW-0479">Metal-binding</keyword>
<keyword id="KW-1185">Reference proteome</keyword>
<keyword id="KW-0862">Zinc</keyword>
<evidence type="ECO:0000250" key="1"/>
<evidence type="ECO:0000255" key="2"/>
<evidence type="ECO:0000256" key="3">
    <source>
        <dbReference type="SAM" id="MobiDB-lite"/>
    </source>
</evidence>
<evidence type="ECO:0000269" key="4">
    <source>
    </source>
</evidence>
<evidence type="ECO:0000305" key="5"/>
<protein>
    <recommendedName>
        <fullName>Aminodeoxyfutalosine deaminase</fullName>
        <shortName>AFL deaminase</shortName>
        <shortName>Aminofutalosine deaminase</shortName>
        <ecNumber>3.5.4.40</ecNumber>
    </recommendedName>
</protein>
<proteinExistence type="evidence at protein level"/>
<accession>O86737</accession>
<comment type="function">
    <text evidence="4">Catalyzes the deamination of aminodeoxyfutalosine (AFL) into futalosine (FL), a step in the biosynthesis of menaquinone (MK, vitamin K2).</text>
</comment>
<comment type="catalytic activity">
    <reaction evidence="4">
        <text>6-amino-6-deoxyfutalosine + H2O + H(+) = futalosine + NH4(+)</text>
        <dbReference type="Rhea" id="RHEA:40075"/>
        <dbReference type="ChEBI" id="CHEBI:15377"/>
        <dbReference type="ChEBI" id="CHEBI:15378"/>
        <dbReference type="ChEBI" id="CHEBI:28938"/>
        <dbReference type="ChEBI" id="CHEBI:58863"/>
        <dbReference type="ChEBI" id="CHEBI:64286"/>
        <dbReference type="EC" id="3.5.4.40"/>
    </reaction>
</comment>
<comment type="cofactor">
    <cofactor evidence="1">
        <name>Zn(2+)</name>
        <dbReference type="ChEBI" id="CHEBI:29105"/>
    </cofactor>
    <text evidence="1">Binds 1 zinc ion per subunit.</text>
</comment>
<comment type="pathway">
    <text evidence="4">Quinol/quinone metabolism; menaquinone biosynthesis.</text>
</comment>
<comment type="similarity">
    <text evidence="5">Belongs to the metallo-dependent hydrolases superfamily. Adenosine and AMP deaminases family.</text>
</comment>
<reference key="1">
    <citation type="journal article" date="2002" name="Nature">
        <title>Complete genome sequence of the model actinomycete Streptomyces coelicolor A3(2).</title>
        <authorList>
            <person name="Bentley S.D."/>
            <person name="Chater K.F."/>
            <person name="Cerdeno-Tarraga A.-M."/>
            <person name="Challis G.L."/>
            <person name="Thomson N.R."/>
            <person name="James K.D."/>
            <person name="Harris D.E."/>
            <person name="Quail M.A."/>
            <person name="Kieser H."/>
            <person name="Harper D."/>
            <person name="Bateman A."/>
            <person name="Brown S."/>
            <person name="Chandra G."/>
            <person name="Chen C.W."/>
            <person name="Collins M."/>
            <person name="Cronin A."/>
            <person name="Fraser A."/>
            <person name="Goble A."/>
            <person name="Hidalgo J."/>
            <person name="Hornsby T."/>
            <person name="Howarth S."/>
            <person name="Huang C.-H."/>
            <person name="Kieser T."/>
            <person name="Larke L."/>
            <person name="Murphy L.D."/>
            <person name="Oliver K."/>
            <person name="O'Neil S."/>
            <person name="Rabbinowitsch E."/>
            <person name="Rajandream M.A."/>
            <person name="Rutherford K.M."/>
            <person name="Rutter S."/>
            <person name="Seeger K."/>
            <person name="Saunders D."/>
            <person name="Sharp S."/>
            <person name="Squares R."/>
            <person name="Squares S."/>
            <person name="Taylor K."/>
            <person name="Warren T."/>
            <person name="Wietzorrek A."/>
            <person name="Woodward J.R."/>
            <person name="Barrell B.G."/>
            <person name="Parkhill J."/>
            <person name="Hopwood D.A."/>
        </authorList>
    </citation>
    <scope>NUCLEOTIDE SEQUENCE [LARGE SCALE GENOMIC DNA]</scope>
    <source>
        <strain>ATCC BAA-471 / A3(2) / M145</strain>
    </source>
</reference>
<reference key="2">
    <citation type="journal article" date="2013" name="J. Am. Chem. Soc.">
        <title>Menaquinone biosynthesis: formation of aminofutalosine requires a unique radical SAM enzyme.</title>
        <authorList>
            <person name="Mahanta N."/>
            <person name="Fedoseyenko D."/>
            <person name="Dairi T."/>
            <person name="Begley T.P."/>
        </authorList>
    </citation>
    <scope>FUNCTION</scope>
    <scope>CATALYTIC ACTIVITY</scope>
    <scope>PATHWAY</scope>
    <source>
        <strain>ATCC BAA-471 / A3(2) / M145</strain>
    </source>
</reference>